<reference key="1">
    <citation type="journal article" date="1998" name="J. Mammal.">
        <title>Phylogeny of the dasyurid marsupial genus Antechinus based on cytochrome b, 12S rRNA, and protamine P1 genes.</title>
        <authorList>
            <person name="Armstrong L.A."/>
            <person name="Krajewski C."/>
            <person name="Westerman M."/>
        </authorList>
    </citation>
    <scope>NUCLEOTIDE SEQUENCE [GENOMIC DNA]</scope>
</reference>
<accession>O63534</accession>
<name>CYB_ANTMI</name>
<proteinExistence type="inferred from homology"/>
<organism>
    <name type="scientific">Antechinus minimus</name>
    <name type="common">Swamp antechinus</name>
    <dbReference type="NCBI Taxonomy" id="71386"/>
    <lineage>
        <taxon>Eukaryota</taxon>
        <taxon>Metazoa</taxon>
        <taxon>Chordata</taxon>
        <taxon>Craniata</taxon>
        <taxon>Vertebrata</taxon>
        <taxon>Euteleostomi</taxon>
        <taxon>Mammalia</taxon>
        <taxon>Metatheria</taxon>
        <taxon>Dasyuromorphia</taxon>
        <taxon>Dasyuridae</taxon>
        <taxon>Antechinus</taxon>
    </lineage>
</organism>
<gene>
    <name type="primary">MT-CYB</name>
    <name type="synonym">COB</name>
    <name type="synonym">CYTB</name>
    <name type="synonym">MTCYB</name>
</gene>
<dbReference type="EMBL" id="AF038286">
    <property type="protein sequence ID" value="AAC15613.1"/>
    <property type="molecule type" value="Genomic_DNA"/>
</dbReference>
<dbReference type="SMR" id="O63534"/>
<dbReference type="GO" id="GO:0005743">
    <property type="term" value="C:mitochondrial inner membrane"/>
    <property type="evidence" value="ECO:0007669"/>
    <property type="project" value="UniProtKB-SubCell"/>
</dbReference>
<dbReference type="GO" id="GO:0045275">
    <property type="term" value="C:respiratory chain complex III"/>
    <property type="evidence" value="ECO:0007669"/>
    <property type="project" value="InterPro"/>
</dbReference>
<dbReference type="GO" id="GO:0046872">
    <property type="term" value="F:metal ion binding"/>
    <property type="evidence" value="ECO:0007669"/>
    <property type="project" value="UniProtKB-KW"/>
</dbReference>
<dbReference type="GO" id="GO:0008121">
    <property type="term" value="F:ubiquinol-cytochrome-c reductase activity"/>
    <property type="evidence" value="ECO:0007669"/>
    <property type="project" value="InterPro"/>
</dbReference>
<dbReference type="GO" id="GO:0006122">
    <property type="term" value="P:mitochondrial electron transport, ubiquinol to cytochrome c"/>
    <property type="evidence" value="ECO:0007669"/>
    <property type="project" value="TreeGrafter"/>
</dbReference>
<dbReference type="CDD" id="cd00290">
    <property type="entry name" value="cytochrome_b_C"/>
    <property type="match status" value="1"/>
</dbReference>
<dbReference type="CDD" id="cd00284">
    <property type="entry name" value="Cytochrome_b_N"/>
    <property type="match status" value="1"/>
</dbReference>
<dbReference type="FunFam" id="1.20.810.10:FF:000002">
    <property type="entry name" value="Cytochrome b"/>
    <property type="match status" value="1"/>
</dbReference>
<dbReference type="Gene3D" id="1.20.810.10">
    <property type="entry name" value="Cytochrome Bc1 Complex, Chain C"/>
    <property type="match status" value="1"/>
</dbReference>
<dbReference type="InterPro" id="IPR005798">
    <property type="entry name" value="Cyt_b/b6_C"/>
</dbReference>
<dbReference type="InterPro" id="IPR036150">
    <property type="entry name" value="Cyt_b/b6_C_sf"/>
</dbReference>
<dbReference type="InterPro" id="IPR005797">
    <property type="entry name" value="Cyt_b/b6_N"/>
</dbReference>
<dbReference type="InterPro" id="IPR027387">
    <property type="entry name" value="Cytb/b6-like_sf"/>
</dbReference>
<dbReference type="InterPro" id="IPR030689">
    <property type="entry name" value="Cytochrome_b"/>
</dbReference>
<dbReference type="InterPro" id="IPR048260">
    <property type="entry name" value="Cytochrome_b_C_euk/bac"/>
</dbReference>
<dbReference type="InterPro" id="IPR048259">
    <property type="entry name" value="Cytochrome_b_N_euk/bac"/>
</dbReference>
<dbReference type="InterPro" id="IPR016174">
    <property type="entry name" value="Di-haem_cyt_TM"/>
</dbReference>
<dbReference type="PANTHER" id="PTHR19271">
    <property type="entry name" value="CYTOCHROME B"/>
    <property type="match status" value="1"/>
</dbReference>
<dbReference type="PANTHER" id="PTHR19271:SF16">
    <property type="entry name" value="CYTOCHROME B"/>
    <property type="match status" value="1"/>
</dbReference>
<dbReference type="Pfam" id="PF00032">
    <property type="entry name" value="Cytochrom_B_C"/>
    <property type="match status" value="1"/>
</dbReference>
<dbReference type="Pfam" id="PF00033">
    <property type="entry name" value="Cytochrome_B"/>
    <property type="match status" value="1"/>
</dbReference>
<dbReference type="PIRSF" id="PIRSF038885">
    <property type="entry name" value="COB"/>
    <property type="match status" value="1"/>
</dbReference>
<dbReference type="SUPFAM" id="SSF81648">
    <property type="entry name" value="a domain/subunit of cytochrome bc1 complex (Ubiquinol-cytochrome c reductase)"/>
    <property type="match status" value="1"/>
</dbReference>
<dbReference type="SUPFAM" id="SSF81342">
    <property type="entry name" value="Transmembrane di-heme cytochromes"/>
    <property type="match status" value="1"/>
</dbReference>
<dbReference type="PROSITE" id="PS51003">
    <property type="entry name" value="CYTB_CTER"/>
    <property type="match status" value="1"/>
</dbReference>
<dbReference type="PROSITE" id="PS51002">
    <property type="entry name" value="CYTB_NTER"/>
    <property type="match status" value="1"/>
</dbReference>
<feature type="chain" id="PRO_0000060597" description="Cytochrome b">
    <location>
        <begin position="1"/>
        <end position="381"/>
    </location>
</feature>
<feature type="transmembrane region" description="Helical" evidence="2">
    <location>
        <begin position="33"/>
        <end position="53"/>
    </location>
</feature>
<feature type="transmembrane region" description="Helical" evidence="2">
    <location>
        <begin position="77"/>
        <end position="98"/>
    </location>
</feature>
<feature type="transmembrane region" description="Helical" evidence="2">
    <location>
        <begin position="113"/>
        <end position="133"/>
    </location>
</feature>
<feature type="transmembrane region" description="Helical" evidence="2">
    <location>
        <begin position="178"/>
        <end position="198"/>
    </location>
</feature>
<feature type="transmembrane region" description="Helical" evidence="2">
    <location>
        <begin position="226"/>
        <end position="246"/>
    </location>
</feature>
<feature type="transmembrane region" description="Helical" evidence="2">
    <location>
        <begin position="288"/>
        <end position="308"/>
    </location>
</feature>
<feature type="transmembrane region" description="Helical" evidence="2">
    <location>
        <begin position="320"/>
        <end position="340"/>
    </location>
</feature>
<feature type="transmembrane region" description="Helical" evidence="2">
    <location>
        <begin position="347"/>
        <end position="367"/>
    </location>
</feature>
<feature type="binding site" description="axial binding residue" evidence="2">
    <location>
        <position position="83"/>
    </location>
    <ligand>
        <name>heme b</name>
        <dbReference type="ChEBI" id="CHEBI:60344"/>
        <label>b562</label>
    </ligand>
    <ligandPart>
        <name>Fe</name>
        <dbReference type="ChEBI" id="CHEBI:18248"/>
    </ligandPart>
</feature>
<feature type="binding site" description="axial binding residue" evidence="2">
    <location>
        <position position="97"/>
    </location>
    <ligand>
        <name>heme b</name>
        <dbReference type="ChEBI" id="CHEBI:60344"/>
        <label>b566</label>
    </ligand>
    <ligandPart>
        <name>Fe</name>
        <dbReference type="ChEBI" id="CHEBI:18248"/>
    </ligandPart>
</feature>
<feature type="binding site" description="axial binding residue" evidence="2">
    <location>
        <position position="182"/>
    </location>
    <ligand>
        <name>heme b</name>
        <dbReference type="ChEBI" id="CHEBI:60344"/>
        <label>b562</label>
    </ligand>
    <ligandPart>
        <name>Fe</name>
        <dbReference type="ChEBI" id="CHEBI:18248"/>
    </ligandPart>
</feature>
<feature type="binding site" description="axial binding residue" evidence="2">
    <location>
        <position position="196"/>
    </location>
    <ligand>
        <name>heme b</name>
        <dbReference type="ChEBI" id="CHEBI:60344"/>
        <label>b566</label>
    </ligand>
    <ligandPart>
        <name>Fe</name>
        <dbReference type="ChEBI" id="CHEBI:18248"/>
    </ligandPart>
</feature>
<feature type="binding site" evidence="2">
    <location>
        <position position="201"/>
    </location>
    <ligand>
        <name>a ubiquinone</name>
        <dbReference type="ChEBI" id="CHEBI:16389"/>
    </ligand>
</feature>
<keyword id="KW-0249">Electron transport</keyword>
<keyword id="KW-0349">Heme</keyword>
<keyword id="KW-0408">Iron</keyword>
<keyword id="KW-0472">Membrane</keyword>
<keyword id="KW-0479">Metal-binding</keyword>
<keyword id="KW-0496">Mitochondrion</keyword>
<keyword id="KW-0999">Mitochondrion inner membrane</keyword>
<keyword id="KW-0679">Respiratory chain</keyword>
<keyword id="KW-0812">Transmembrane</keyword>
<keyword id="KW-1133">Transmembrane helix</keyword>
<keyword id="KW-0813">Transport</keyword>
<keyword id="KW-0830">Ubiquinone</keyword>
<comment type="function">
    <text evidence="2">Component of the ubiquinol-cytochrome c reductase complex (complex III or cytochrome b-c1 complex) that is part of the mitochondrial respiratory chain. The b-c1 complex mediates electron transfer from ubiquinol to cytochrome c. Contributes to the generation of a proton gradient across the mitochondrial membrane that is then used for ATP synthesis.</text>
</comment>
<comment type="cofactor">
    <cofactor evidence="2">
        <name>heme b</name>
        <dbReference type="ChEBI" id="CHEBI:60344"/>
    </cofactor>
    <text evidence="2">Binds 2 heme b groups non-covalently.</text>
</comment>
<comment type="subunit">
    <text evidence="2">The cytochrome bc1 complex contains 11 subunits: 3 respiratory subunits (MT-CYB, CYC1 and UQCRFS1), 2 core proteins (UQCRC1 and UQCRC2) and 6 low-molecular weight proteins (UQCRH/QCR6, UQCRB/QCR7, UQCRQ/QCR8, UQCR10/QCR9, UQCR11/QCR10 and a cleavage product of UQCRFS1). This cytochrome bc1 complex then forms a dimer.</text>
</comment>
<comment type="subcellular location">
    <subcellularLocation>
        <location evidence="2">Mitochondrion inner membrane</location>
        <topology evidence="2">Multi-pass membrane protein</topology>
    </subcellularLocation>
</comment>
<comment type="miscellaneous">
    <text evidence="1">Heme 1 (or BL or b562) is low-potential and absorbs at about 562 nm, and heme 2 (or BH or b566) is high-potential and absorbs at about 566 nm.</text>
</comment>
<comment type="similarity">
    <text evidence="3 4">Belongs to the cytochrome b family.</text>
</comment>
<comment type="caution">
    <text evidence="2">The full-length protein contains only eight transmembrane helices, not nine as predicted by bioinformatics tools.</text>
</comment>
<sequence length="381" mass="42717">MTNLRKTHPLMKIINHSFIDLPAPSNISAWWNFGSLLGACLIIQILTGFFLAMHYTSDTLTAFSSVAHICRDVNYGWLLRNLHANGASMFFMCLFLHVGRGIYYGSYLYKETWNIGVILLLTVMATAFVGYVLPWGQMSFWGATVITNLLSAIPYIGTTLAEWIWGGFAVDKATLTRFFAFHFILPFIITALAIVHLLFLHETGSNNPSGINPNSDKIPFHPYYTIKDALGLTLLFLTLLLLALFSPDSLGDPDNFSPANPLNTPPHIKPGWYFLFAYAILRSIPNKLGGVLALLASILILLIIPLLHTANQRSMMFRPISQTLFWILTANLITLTWIGGQPVEQPFIIIGQLASMLYFLLILVLMPLAGLFENYMLKPKW</sequence>
<protein>
    <recommendedName>
        <fullName>Cytochrome b</fullName>
    </recommendedName>
    <alternativeName>
        <fullName>Complex III subunit 3</fullName>
    </alternativeName>
    <alternativeName>
        <fullName>Complex III subunit III</fullName>
    </alternativeName>
    <alternativeName>
        <fullName>Cytochrome b-c1 complex subunit 3</fullName>
    </alternativeName>
    <alternativeName>
        <fullName>Ubiquinol-cytochrome-c reductase complex cytochrome b subunit</fullName>
    </alternativeName>
</protein>
<geneLocation type="mitochondrion"/>
<evidence type="ECO:0000250" key="1"/>
<evidence type="ECO:0000250" key="2">
    <source>
        <dbReference type="UniProtKB" id="P00157"/>
    </source>
</evidence>
<evidence type="ECO:0000255" key="3">
    <source>
        <dbReference type="PROSITE-ProRule" id="PRU00967"/>
    </source>
</evidence>
<evidence type="ECO:0000255" key="4">
    <source>
        <dbReference type="PROSITE-ProRule" id="PRU00968"/>
    </source>
</evidence>